<dbReference type="EC" id="3.4.24.7" evidence="4 5 6 8"/>
<dbReference type="EMBL" id="X54925">
    <property type="protein sequence ID" value="CAA38691.1"/>
    <property type="molecule type" value="mRNA"/>
</dbReference>
<dbReference type="EMBL" id="X05231">
    <property type="protein sequence ID" value="CAA28858.1"/>
    <property type="molecule type" value="mRNA"/>
</dbReference>
<dbReference type="EMBL" id="M13509">
    <property type="protein sequence ID" value="AAA35699.1"/>
    <property type="molecule type" value="mRNA"/>
</dbReference>
<dbReference type="EMBL" id="U78045">
    <property type="protein sequence ID" value="AAB36941.1"/>
    <property type="molecule type" value="Genomic_DNA"/>
</dbReference>
<dbReference type="EMBL" id="BT006874">
    <property type="protein sequence ID" value="AAP35520.1"/>
    <property type="molecule type" value="mRNA"/>
</dbReference>
<dbReference type="EMBL" id="AY769434">
    <property type="protein sequence ID" value="AAV28732.1"/>
    <property type="molecule type" value="Genomic_DNA"/>
</dbReference>
<dbReference type="EMBL" id="BC013875">
    <property type="protein sequence ID" value="AAH13875.1"/>
    <property type="molecule type" value="mRNA"/>
</dbReference>
<dbReference type="EMBL" id="M16567">
    <property type="protein sequence ID" value="AAA52033.1"/>
    <property type="molecule type" value="Genomic_DNA"/>
</dbReference>
<dbReference type="EMBL" id="M15996">
    <property type="protein sequence ID" value="AAA35700.1"/>
    <property type="molecule type" value="mRNA"/>
</dbReference>
<dbReference type="CCDS" id="CCDS8322.1"/>
<dbReference type="PIR" id="A37308">
    <property type="entry name" value="KCHUI"/>
</dbReference>
<dbReference type="RefSeq" id="NP_002412.1">
    <property type="nucleotide sequence ID" value="NM_002421.4"/>
</dbReference>
<dbReference type="PDB" id="1AYK">
    <property type="method" value="NMR"/>
    <property type="chains" value="A=101-269"/>
</dbReference>
<dbReference type="PDB" id="1CGE">
    <property type="method" value="X-ray"/>
    <property type="resolution" value="1.90 A"/>
    <property type="chains" value="A=102-269"/>
</dbReference>
<dbReference type="PDB" id="1CGF">
    <property type="method" value="X-ray"/>
    <property type="resolution" value="2.10 A"/>
    <property type="chains" value="A/B=102-263"/>
</dbReference>
<dbReference type="PDB" id="1CGL">
    <property type="method" value="X-ray"/>
    <property type="resolution" value="2.40 A"/>
    <property type="chains" value="A/B=101-269"/>
</dbReference>
<dbReference type="PDB" id="1HFC">
    <property type="method" value="X-ray"/>
    <property type="resolution" value="1.50 A"/>
    <property type="chains" value="A=101-269"/>
</dbReference>
<dbReference type="PDB" id="1SU3">
    <property type="method" value="X-ray"/>
    <property type="resolution" value="2.20 A"/>
    <property type="chains" value="A/B=20-469"/>
</dbReference>
<dbReference type="PDB" id="2AYK">
    <property type="method" value="NMR"/>
    <property type="chains" value="A=101-269"/>
</dbReference>
<dbReference type="PDB" id="2CLT">
    <property type="method" value="X-ray"/>
    <property type="resolution" value="2.67 A"/>
    <property type="chains" value="A/B=100-466"/>
</dbReference>
<dbReference type="PDB" id="2J0T">
    <property type="method" value="X-ray"/>
    <property type="resolution" value="2.54 A"/>
    <property type="chains" value="A/B/C=101-269"/>
</dbReference>
<dbReference type="PDB" id="2TCL">
    <property type="method" value="X-ray"/>
    <property type="resolution" value="2.20 A"/>
    <property type="chains" value="A=101-269"/>
</dbReference>
<dbReference type="PDB" id="3AYK">
    <property type="method" value="NMR"/>
    <property type="chains" value="A=101-269"/>
</dbReference>
<dbReference type="PDB" id="3SHI">
    <property type="method" value="X-ray"/>
    <property type="resolution" value="2.20 A"/>
    <property type="chains" value="A/G/M=106-261"/>
</dbReference>
<dbReference type="PDB" id="4AUO">
    <property type="method" value="X-ray"/>
    <property type="resolution" value="3.00 A"/>
    <property type="chains" value="A/B=100-466"/>
</dbReference>
<dbReference type="PDB" id="4AYK">
    <property type="method" value="NMR"/>
    <property type="chains" value="A=101-269"/>
</dbReference>
<dbReference type="PDB" id="966C">
    <property type="method" value="X-ray"/>
    <property type="resolution" value="1.90 A"/>
    <property type="chains" value="A=108-264"/>
</dbReference>
<dbReference type="PDBsum" id="1AYK"/>
<dbReference type="PDBsum" id="1CGE"/>
<dbReference type="PDBsum" id="1CGF"/>
<dbReference type="PDBsum" id="1CGL"/>
<dbReference type="PDBsum" id="1HFC"/>
<dbReference type="PDBsum" id="1SU3"/>
<dbReference type="PDBsum" id="2AYK"/>
<dbReference type="PDBsum" id="2CLT"/>
<dbReference type="PDBsum" id="2J0T"/>
<dbReference type="PDBsum" id="2TCL"/>
<dbReference type="PDBsum" id="3AYK"/>
<dbReference type="PDBsum" id="3SHI"/>
<dbReference type="PDBsum" id="4AUO"/>
<dbReference type="PDBsum" id="4AYK"/>
<dbReference type="PDBsum" id="966C"/>
<dbReference type="BMRB" id="P03956"/>
<dbReference type="SASBDB" id="P03956"/>
<dbReference type="SMR" id="P03956"/>
<dbReference type="BioGRID" id="110456">
    <property type="interactions" value="25"/>
</dbReference>
<dbReference type="DIP" id="DIP-529N"/>
<dbReference type="FunCoup" id="P03956">
    <property type="interactions" value="333"/>
</dbReference>
<dbReference type="IntAct" id="P03956">
    <property type="interactions" value="3"/>
</dbReference>
<dbReference type="MINT" id="P03956"/>
<dbReference type="STRING" id="9606.ENSP00000322788"/>
<dbReference type="BindingDB" id="P03956"/>
<dbReference type="ChEMBL" id="CHEMBL332"/>
<dbReference type="DrugBank" id="DB08482">
    <property type="generic name" value="[[1-[N-HYDROXY-ACETAMIDYL]-3-METHYL-BUTYL]-CARBONYL-LEUCINYL]-ALANINE ETHYL ESTER"/>
</dbReference>
<dbReference type="DrugBank" id="DB13020">
    <property type="generic name" value="Apratastat"/>
</dbReference>
<dbReference type="DrugBank" id="DB07556">
    <property type="generic name" value="CGS-27023"/>
</dbReference>
<dbReference type="DrugBank" id="DB08490">
    <property type="generic name" value="CTS-1027"/>
</dbReference>
<dbReference type="DrugBank" id="DB02255">
    <property type="generic name" value="Ilomastat"/>
</dbReference>
<dbReference type="DrugBank" id="DB00786">
    <property type="generic name" value="Marimastat"/>
</dbReference>
<dbReference type="DrugBank" id="DB08403">
    <property type="generic name" value="METHYLAMINO-PHENYLALANYL-LEUCYL-HYDROXAMIC ACID"/>
</dbReference>
<dbReference type="DrugBank" id="DB07926">
    <property type="generic name" value="N-[3-(N'-HYDROXYCARBOXAMIDO)-2-(2-METHYLPROPYL)-PROPANOYL]-O-TYROSINE-N-METHYLAMIDE"/>
</dbReference>
<dbReference type="DrugBank" id="DB08491">
    <property type="generic name" value="N-HYDROXY-2-[4-(4-PHENOXY-BENZENESULFONYL)-TETRAHYDRO-PYRAN-4-YL]-ACETAMIDE"/>
</dbReference>
<dbReference type="DrugBank" id="DB05100">
    <property type="generic name" value="Prinomastat"/>
</dbReference>
<dbReference type="DrugCentral" id="P03956"/>
<dbReference type="GuidetoPHARMACOLOGY" id="1628"/>
<dbReference type="MEROPS" id="M10.001"/>
<dbReference type="GlyConnect" id="301">
    <property type="glycosylation" value="25 N-Linked glycans (2 sites)"/>
</dbReference>
<dbReference type="GlyCosmos" id="P03956">
    <property type="glycosylation" value="2 sites, 48 glycans"/>
</dbReference>
<dbReference type="GlyGen" id="P03956">
    <property type="glycosylation" value="13 sites, 48 N-linked glycans (3 sites)"/>
</dbReference>
<dbReference type="iPTMnet" id="P03956"/>
<dbReference type="PhosphoSitePlus" id="P03956"/>
<dbReference type="BioMuta" id="MMP1"/>
<dbReference type="DMDM" id="116852"/>
<dbReference type="jPOST" id="P03956"/>
<dbReference type="MassIVE" id="P03956"/>
<dbReference type="PaxDb" id="9606-ENSP00000322788"/>
<dbReference type="PeptideAtlas" id="P03956"/>
<dbReference type="ProteomicsDB" id="51623"/>
<dbReference type="Antibodypedia" id="18022">
    <property type="antibodies" value="1111 antibodies from 46 providers"/>
</dbReference>
<dbReference type="DNASU" id="4312"/>
<dbReference type="Ensembl" id="ENST00000315274.7">
    <property type="protein sequence ID" value="ENSP00000322788.6"/>
    <property type="gene ID" value="ENSG00000196611.6"/>
</dbReference>
<dbReference type="GeneID" id="4312"/>
<dbReference type="KEGG" id="hsa:4312"/>
<dbReference type="MANE-Select" id="ENST00000315274.7">
    <property type="protein sequence ID" value="ENSP00000322788.6"/>
    <property type="RefSeq nucleotide sequence ID" value="NM_002421.4"/>
    <property type="RefSeq protein sequence ID" value="NP_002412.1"/>
</dbReference>
<dbReference type="UCSC" id="uc001phi.3">
    <property type="organism name" value="human"/>
</dbReference>
<dbReference type="AGR" id="HGNC:7155"/>
<dbReference type="CTD" id="4312"/>
<dbReference type="DisGeNET" id="4312"/>
<dbReference type="GeneCards" id="MMP1"/>
<dbReference type="HGNC" id="HGNC:7155">
    <property type="gene designation" value="MMP1"/>
</dbReference>
<dbReference type="HPA" id="ENSG00000196611">
    <property type="expression patterns" value="Tissue enhanced (gallbladder, stomach, urinary bladder)"/>
</dbReference>
<dbReference type="MalaCards" id="MMP1"/>
<dbReference type="MIM" id="120353">
    <property type="type" value="gene"/>
</dbReference>
<dbReference type="neXtProt" id="NX_P03956"/>
<dbReference type="OpenTargets" id="ENSG00000196611"/>
<dbReference type="Orphanet" id="79408">
    <property type="disease" value="Autosomal recessive generalized dystrophic epidermolysis bullosa, severe form"/>
</dbReference>
<dbReference type="PharmGKB" id="PA30867"/>
<dbReference type="VEuPathDB" id="HostDB:ENSG00000196611"/>
<dbReference type="eggNOG" id="KOG1565">
    <property type="taxonomic scope" value="Eukaryota"/>
</dbReference>
<dbReference type="GeneTree" id="ENSGT00940000154907"/>
<dbReference type="HOGENOM" id="CLU_015489_6_0_1"/>
<dbReference type="InParanoid" id="P03956"/>
<dbReference type="OMA" id="LHGYPKD"/>
<dbReference type="OrthoDB" id="406838at2759"/>
<dbReference type="PAN-GO" id="P03956">
    <property type="GO annotations" value="3 GO annotations based on evolutionary models"/>
</dbReference>
<dbReference type="PhylomeDB" id="P03956"/>
<dbReference type="TreeFam" id="TF315428"/>
<dbReference type="BRENDA" id="3.4.24.7">
    <property type="organism ID" value="2681"/>
</dbReference>
<dbReference type="PathwayCommons" id="P03956"/>
<dbReference type="Reactome" id="R-HSA-1442490">
    <property type="pathway name" value="Collagen degradation"/>
</dbReference>
<dbReference type="Reactome" id="R-HSA-1474228">
    <property type="pathway name" value="Degradation of the extracellular matrix"/>
</dbReference>
<dbReference type="Reactome" id="R-HSA-1592389">
    <property type="pathway name" value="Activation of Matrix Metalloproteinases"/>
</dbReference>
<dbReference type="Reactome" id="R-HSA-210991">
    <property type="pathway name" value="Basigin interactions"/>
</dbReference>
<dbReference type="Reactome" id="R-HSA-381426">
    <property type="pathway name" value="Regulation of Insulin-like Growth Factor (IGF) transport and uptake by Insulin-like Growth Factor Binding Proteins (IGFBPs)"/>
</dbReference>
<dbReference type="Reactome" id="R-HSA-6785807">
    <property type="pathway name" value="Interleukin-4 and Interleukin-13 signaling"/>
</dbReference>
<dbReference type="SignaLink" id="P03956"/>
<dbReference type="SIGNOR" id="P03956"/>
<dbReference type="BioGRID-ORCS" id="4312">
    <property type="hits" value="9 hits in 1168 CRISPR screens"/>
</dbReference>
<dbReference type="ChiTaRS" id="MMP1">
    <property type="organism name" value="human"/>
</dbReference>
<dbReference type="EvolutionaryTrace" id="P03956"/>
<dbReference type="GeneWiki" id="MMP1"/>
<dbReference type="GenomeRNAi" id="4312"/>
<dbReference type="Pharos" id="P03956">
    <property type="development level" value="Tchem"/>
</dbReference>
<dbReference type="PRO" id="PR:P03956"/>
<dbReference type="Proteomes" id="UP000005640">
    <property type="component" value="Chromosome 11"/>
</dbReference>
<dbReference type="RNAct" id="P03956">
    <property type="molecule type" value="protein"/>
</dbReference>
<dbReference type="Bgee" id="ENSG00000196611">
    <property type="expression patterns" value="Expressed in epithelial cell of pancreas and 127 other cell types or tissues"/>
</dbReference>
<dbReference type="GO" id="GO:0031012">
    <property type="term" value="C:extracellular matrix"/>
    <property type="evidence" value="ECO:0007669"/>
    <property type="project" value="InterPro"/>
</dbReference>
<dbReference type="GO" id="GO:0005576">
    <property type="term" value="C:extracellular region"/>
    <property type="evidence" value="ECO:0000304"/>
    <property type="project" value="Reactome"/>
</dbReference>
<dbReference type="GO" id="GO:0004175">
    <property type="term" value="F:endopeptidase activity"/>
    <property type="evidence" value="ECO:0000314"/>
    <property type="project" value="ParkinsonsUK-UCL"/>
</dbReference>
<dbReference type="GO" id="GO:0004222">
    <property type="term" value="F:metalloendopeptidase activity"/>
    <property type="evidence" value="ECO:0000314"/>
    <property type="project" value="BHF-UCL"/>
</dbReference>
<dbReference type="GO" id="GO:0008233">
    <property type="term" value="F:peptidase activity"/>
    <property type="evidence" value="ECO:0000314"/>
    <property type="project" value="UniProtKB"/>
</dbReference>
<dbReference type="GO" id="GO:0004252">
    <property type="term" value="F:serine-type endopeptidase activity"/>
    <property type="evidence" value="ECO:0000304"/>
    <property type="project" value="Reactome"/>
</dbReference>
<dbReference type="GO" id="GO:0008270">
    <property type="term" value="F:zinc ion binding"/>
    <property type="evidence" value="ECO:0000304"/>
    <property type="project" value="ProtInc"/>
</dbReference>
<dbReference type="GO" id="GO:0071492">
    <property type="term" value="P:cellular response to UV-A"/>
    <property type="evidence" value="ECO:0000314"/>
    <property type="project" value="UniProtKB"/>
</dbReference>
<dbReference type="GO" id="GO:0030574">
    <property type="term" value="P:collagen catabolic process"/>
    <property type="evidence" value="ECO:0000318"/>
    <property type="project" value="GO_Central"/>
</dbReference>
<dbReference type="GO" id="GO:0022617">
    <property type="term" value="P:extracellular matrix disassembly"/>
    <property type="evidence" value="ECO:0000304"/>
    <property type="project" value="Reactome"/>
</dbReference>
<dbReference type="GO" id="GO:0030198">
    <property type="term" value="P:extracellular matrix organization"/>
    <property type="evidence" value="ECO:0000318"/>
    <property type="project" value="GO_Central"/>
</dbReference>
<dbReference type="GO" id="GO:0031334">
    <property type="term" value="P:positive regulation of protein-containing complex assembly"/>
    <property type="evidence" value="ECO:0000314"/>
    <property type="project" value="ParkinsonsUK-UCL"/>
</dbReference>
<dbReference type="GO" id="GO:0006508">
    <property type="term" value="P:proteolysis"/>
    <property type="evidence" value="ECO:0000314"/>
    <property type="project" value="ParkinsonsUK-UCL"/>
</dbReference>
<dbReference type="CDD" id="cd00094">
    <property type="entry name" value="HX"/>
    <property type="match status" value="1"/>
</dbReference>
<dbReference type="CDD" id="cd04278">
    <property type="entry name" value="ZnMc_MMP"/>
    <property type="match status" value="1"/>
</dbReference>
<dbReference type="FunFam" id="3.40.390.10:FF:000007">
    <property type="entry name" value="Collagenase 3"/>
    <property type="match status" value="1"/>
</dbReference>
<dbReference type="FunFam" id="2.110.10.10:FF:000002">
    <property type="entry name" value="Matrix metallopeptidase 3"/>
    <property type="match status" value="1"/>
</dbReference>
<dbReference type="Gene3D" id="3.40.390.10">
    <property type="entry name" value="Collagenase (Catalytic Domain)"/>
    <property type="match status" value="1"/>
</dbReference>
<dbReference type="Gene3D" id="2.110.10.10">
    <property type="entry name" value="Hemopexin-like domain"/>
    <property type="match status" value="1"/>
</dbReference>
<dbReference type="InterPro" id="IPR000585">
    <property type="entry name" value="Hemopexin-like_dom"/>
</dbReference>
<dbReference type="InterPro" id="IPR036375">
    <property type="entry name" value="Hemopexin-like_dom_sf"/>
</dbReference>
<dbReference type="InterPro" id="IPR018487">
    <property type="entry name" value="Hemopexin-like_repeat"/>
</dbReference>
<dbReference type="InterPro" id="IPR018486">
    <property type="entry name" value="Hemopexin_CS"/>
</dbReference>
<dbReference type="InterPro" id="IPR033739">
    <property type="entry name" value="M10A_MMP"/>
</dbReference>
<dbReference type="InterPro" id="IPR024079">
    <property type="entry name" value="MetalloPept_cat_dom_sf"/>
</dbReference>
<dbReference type="InterPro" id="IPR001818">
    <property type="entry name" value="Pept_M10_metallopeptidase"/>
</dbReference>
<dbReference type="InterPro" id="IPR021190">
    <property type="entry name" value="Pept_M10A"/>
</dbReference>
<dbReference type="InterPro" id="IPR021158">
    <property type="entry name" value="Pept_M10A_Zn_BS"/>
</dbReference>
<dbReference type="InterPro" id="IPR006026">
    <property type="entry name" value="Peptidase_Metallo"/>
</dbReference>
<dbReference type="InterPro" id="IPR002477">
    <property type="entry name" value="Peptidoglycan-bd-like"/>
</dbReference>
<dbReference type="InterPro" id="IPR036365">
    <property type="entry name" value="PGBD-like_sf"/>
</dbReference>
<dbReference type="PANTHER" id="PTHR10201:SF151">
    <property type="entry name" value="INTERSTITIAL COLLAGENASE"/>
    <property type="match status" value="1"/>
</dbReference>
<dbReference type="PANTHER" id="PTHR10201">
    <property type="entry name" value="MATRIX METALLOPROTEINASE"/>
    <property type="match status" value="1"/>
</dbReference>
<dbReference type="Pfam" id="PF00045">
    <property type="entry name" value="Hemopexin"/>
    <property type="match status" value="4"/>
</dbReference>
<dbReference type="Pfam" id="PF00413">
    <property type="entry name" value="Peptidase_M10"/>
    <property type="match status" value="1"/>
</dbReference>
<dbReference type="Pfam" id="PF01471">
    <property type="entry name" value="PG_binding_1"/>
    <property type="match status" value="1"/>
</dbReference>
<dbReference type="PIRSF" id="PIRSF001191">
    <property type="entry name" value="Peptidase_M10A_matrix"/>
    <property type="match status" value="1"/>
</dbReference>
<dbReference type="PRINTS" id="PR00138">
    <property type="entry name" value="MATRIXIN"/>
</dbReference>
<dbReference type="SMART" id="SM00120">
    <property type="entry name" value="HX"/>
    <property type="match status" value="4"/>
</dbReference>
<dbReference type="SMART" id="SM00235">
    <property type="entry name" value="ZnMc"/>
    <property type="match status" value="1"/>
</dbReference>
<dbReference type="SUPFAM" id="SSF50923">
    <property type="entry name" value="Hemopexin-like domain"/>
    <property type="match status" value="1"/>
</dbReference>
<dbReference type="SUPFAM" id="SSF55486">
    <property type="entry name" value="Metalloproteases ('zincins'), catalytic domain"/>
    <property type="match status" value="1"/>
</dbReference>
<dbReference type="SUPFAM" id="SSF47090">
    <property type="entry name" value="PGBD-like"/>
    <property type="match status" value="1"/>
</dbReference>
<dbReference type="PROSITE" id="PS00546">
    <property type="entry name" value="CYSTEINE_SWITCH"/>
    <property type="match status" value="1"/>
</dbReference>
<dbReference type="PROSITE" id="PS00024">
    <property type="entry name" value="HEMOPEXIN"/>
    <property type="match status" value="1"/>
</dbReference>
<dbReference type="PROSITE" id="PS51642">
    <property type="entry name" value="HEMOPEXIN_2"/>
    <property type="match status" value="4"/>
</dbReference>
<dbReference type="PROSITE" id="PS00142">
    <property type="entry name" value="ZINC_PROTEASE"/>
    <property type="match status" value="1"/>
</dbReference>
<proteinExistence type="evidence at protein level"/>
<protein>
    <recommendedName>
        <fullName>Interstitial collagenase</fullName>
        <ecNumber evidence="4 5 6 8">3.4.24.7</ecNumber>
    </recommendedName>
    <alternativeName>
        <fullName>Fibroblast collagenase</fullName>
    </alternativeName>
    <alternativeName>
        <fullName>Matrix metalloproteinase-1</fullName>
        <shortName>MMP-1</shortName>
    </alternativeName>
    <component>
        <recommendedName>
            <fullName>22 kDa interstitial collagenase</fullName>
        </recommendedName>
    </component>
    <component>
        <recommendedName>
            <fullName>27 kDa interstitial collagenase</fullName>
        </recommendedName>
    </component>
</protein>
<reference key="1">
    <citation type="journal article" date="1990" name="Cancer Res.">
        <title>Cloning and characterization of human tumor cell interstitial collagenase.</title>
        <authorList>
            <person name="Templeton N.S."/>
            <person name="Brown P.D."/>
            <person name="Levy A.T."/>
            <person name="Margulies I.M.K."/>
            <person name="Liotta L.A."/>
            <person name="Stetler-Stevenson W.G."/>
        </authorList>
    </citation>
    <scope>NUCLEOTIDE SEQUENCE [MRNA]</scope>
    <scope>SUBCELLULAR LOCATION</scope>
</reference>
<reference key="2">
    <citation type="journal article" date="1986" name="Biochem. J.">
        <title>Comparison of human stromelysin and collagenase by cloning and sequence analysis.</title>
        <authorList>
            <person name="Whitham S.E."/>
            <person name="Murphy G."/>
            <person name="Angel P."/>
            <person name="Rahmsdorf H.J."/>
            <person name="Smith B."/>
            <person name="Lyons A."/>
            <person name="Harris T.J.R."/>
            <person name="Reynolds J.J."/>
            <person name="Herrlich P."/>
            <person name="Docherty A.J.P."/>
        </authorList>
    </citation>
    <scope>NUCLEOTIDE SEQUENCE [MRNA]</scope>
</reference>
<reference key="3">
    <citation type="journal article" date="1986" name="J. Biol. Chem.">
        <title>Human fibroblast collagenase. Complete primary structure and homology to an oncogene transformation-induced rat protein.</title>
        <authorList>
            <person name="Goldberg G.I."/>
            <person name="Wilhelm S.M."/>
            <person name="Kronberger A."/>
            <person name="Bauer E.A."/>
            <person name="Grant G.A."/>
            <person name="Eisen A.Z."/>
        </authorList>
    </citation>
    <scope>NUCLEOTIDE SEQUENCE [MRNA]</scope>
</reference>
<reference key="4">
    <citation type="submission" date="1996-12" db="EMBL/GenBank/DDBJ databases">
        <title>Three matrix metalloproteinases on 81kb of P1 insert.</title>
        <authorList>
            <person name="Lin D."/>
            <person name="Duncan M."/>
            <person name="Allen E."/>
            <person name="Araujo R."/>
            <person name="Aparicio A."/>
            <person name="Chai A."/>
            <person name="Chung E."/>
            <person name="Davis K."/>
            <person name="Federspiel N."/>
            <person name="Hyman R."/>
            <person name="Kalman S."/>
            <person name="Komp C."/>
            <person name="Kurdi O."/>
            <person name="Lashkari D."/>
            <person name="Lew H."/>
            <person name="Namath A."/>
            <person name="Oefner P."/>
            <person name="Roberts D."/>
            <person name="Heller R."/>
            <person name="Davis R.W."/>
        </authorList>
    </citation>
    <scope>NUCLEOTIDE SEQUENCE [GENOMIC DNA]</scope>
</reference>
<reference key="5">
    <citation type="submission" date="2004-10" db="EMBL/GenBank/DDBJ databases">
        <title>Cloning of human full-length CDSs in BD Creator(TM) system donor vector.</title>
        <authorList>
            <person name="Kalnine N."/>
            <person name="Chen X."/>
            <person name="Rolfs A."/>
            <person name="Halleck A."/>
            <person name="Hines L."/>
            <person name="Eisenstein S."/>
            <person name="Koundinya M."/>
            <person name="Raphael J."/>
            <person name="Moreira D."/>
            <person name="Kelley T."/>
            <person name="LaBaer J."/>
            <person name="Lin Y."/>
            <person name="Phelan M."/>
            <person name="Farmer A."/>
        </authorList>
    </citation>
    <scope>NUCLEOTIDE SEQUENCE [LARGE SCALE MRNA]</scope>
</reference>
<reference key="6">
    <citation type="submission" date="2004-09" db="EMBL/GenBank/DDBJ databases">
        <authorList>
            <consortium name="NIEHS SNPs program"/>
        </authorList>
    </citation>
    <scope>NUCLEOTIDE SEQUENCE [GENOMIC DNA]</scope>
    <scope>VARIANTS VAL-191; GLN-405 AND THR-406</scope>
</reference>
<reference key="7">
    <citation type="journal article" date="2004" name="Genome Res.">
        <title>The status, quality, and expansion of the NIH full-length cDNA project: the Mammalian Gene Collection (MGC).</title>
        <authorList>
            <consortium name="The MGC Project Team"/>
        </authorList>
    </citation>
    <scope>NUCLEOTIDE SEQUENCE [LARGE SCALE MRNA]</scope>
    <source>
        <tissue>Ovary</tissue>
    </source>
</reference>
<reference key="8">
    <citation type="journal article" date="1987" name="Mol. Cell. Biol.">
        <title>12-O-tetradecanoyl-phorbol-13-acetate induction of the human collagenase gene is mediated by an inducible enhancer element located in the 5'-flanking region.</title>
        <authorList>
            <person name="Angel P."/>
            <person name="Baumann I."/>
            <person name="Stein B."/>
            <person name="Delius H."/>
            <person name="Rahmsdorf H.J."/>
            <person name="Herrlich P."/>
        </authorList>
    </citation>
    <scope>NUCLEOTIDE SEQUENCE [GENOMIC DNA] OF 1-35</scope>
</reference>
<reference key="9">
    <citation type="journal article" date="1987" name="J. Clin. Invest.">
        <title>Molecular cloning of human synovial cell collagenase and selection of a single gene from genomic DNA.</title>
        <authorList>
            <person name="Brinckerhoff C.E."/>
            <person name="Ruby P.L."/>
            <person name="Austin S.D."/>
            <person name="Fini M.E."/>
            <person name="White H.D."/>
        </authorList>
    </citation>
    <scope>NUCLEOTIDE SEQUENCE [MRNA] OF 1-70</scope>
    <source>
        <tissue>Synovial cell</tissue>
    </source>
</reference>
<reference key="10">
    <citation type="journal article" date="1989" name="Biochem. J.">
        <title>Fragments of human fibroblast collagenase. Purification and characterization.</title>
        <authorList>
            <person name="Clark I.M."/>
            <person name="Cawston T.E."/>
        </authorList>
    </citation>
    <scope>PROTEIN SEQUENCE OF 100-112 AND 270-287</scope>
    <scope>CATALYTIC ACTIVITY</scope>
    <source>
        <tissue>Fibroblast</tissue>
    </source>
</reference>
<reference key="11">
    <citation type="journal article" date="1987" name="J. Biol. Chem.">
        <title>Human fibroblast collagenase contains an amino acid sequence homologous to the zinc-binding site of Serratia protease.</title>
        <authorList>
            <person name="McKerrow J.H."/>
        </authorList>
    </citation>
    <scope>SIMILARITY TO THERMOLYSIN TYPE PROTEASES</scope>
</reference>
<reference key="12">
    <citation type="journal article" date="1990" name="Proc. Natl. Acad. Sci. U.S.A.">
        <title>Multiple modes of activation of latent human fibroblast collagenase: evidence for the role of a Cys73 active-site zinc complex in latency and a 'cysteine switch' mechanism for activation.</title>
        <authorList>
            <person name="Springman E.B."/>
            <person name="Angleton E.L."/>
            <person name="Birkedal-Hansen H."/>
            <person name="Van Wart H.E."/>
        </authorList>
    </citation>
    <scope>FUNCTION</scope>
    <scope>CATALYTIC ACTIVITY</scope>
    <scope>DOMAIN</scope>
</reference>
<reference key="13">
    <citation type="journal article" date="1991" name="J. Clin. Invest.">
        <title>Interstitial collagenase (matrix metalloproteinase-1) expresses serpinase activity.</title>
        <authorList>
            <person name="Desrochers P.E."/>
            <person name="Jeffrey J.J."/>
            <person name="Weiss S.J."/>
        </authorList>
    </citation>
    <scope>FUNCTION</scope>
    <scope>CATALYTIC ACTIVITY</scope>
</reference>
<reference key="14">
    <citation type="journal article" date="1999" name="Eur. J. Biochem.">
        <title>N-glycan structures of matrix metalloproteinase-1 derived from human fibroblasts and from HT-1080 fibrosarcoma cells.</title>
        <authorList>
            <person name="Saarinen J."/>
            <person name="Welgus H.G."/>
            <person name="Flizar C.A."/>
            <person name="Kalkkinen N."/>
            <person name="Helin J."/>
        </authorList>
    </citation>
    <scope>GLYCOSYLATION AT ASN-120</scope>
</reference>
<reference key="15">
    <citation type="journal article" date="2006" name="FASEB J.">
        <title>Interaction of HIV Tat and matrix metalloproteinase in HIV neuropathogenesis: a new host defense mechanism.</title>
        <authorList>
            <person name="Rumbaugh J."/>
            <person name="Turchan-Cholewo J."/>
            <person name="Galey D."/>
            <person name="St Hillaire C."/>
            <person name="Anderson C."/>
            <person name="Conant K."/>
            <person name="Nath A."/>
        </authorList>
    </citation>
    <scope>FUNCTION</scope>
    <scope>CATALYTIC ACTIVITY</scope>
    <scope>INTERACTION WITH HIV-1 TAT (MICROBIAL INFECTION)</scope>
</reference>
<reference key="16">
    <citation type="journal article" date="2014" name="Cell">
        <title>A secreted tyrosine kinase acts in the extracellular environment.</title>
        <authorList>
            <person name="Bordoli M.R."/>
            <person name="Yum J."/>
            <person name="Breitkopf S.B."/>
            <person name="Thon J.N."/>
            <person name="Italiano J.E. Jr."/>
            <person name="Xiao J."/>
            <person name="Worby C."/>
            <person name="Wong S.K."/>
            <person name="Lin G."/>
            <person name="Edenius M."/>
            <person name="Keller T.L."/>
            <person name="Asara J.M."/>
            <person name="Dixon J.E."/>
            <person name="Yeo C.Y."/>
            <person name="Whitman M."/>
        </authorList>
    </citation>
    <scope>PHOSPHORYLATION AT SER-57; THR-274 AND TYR-360</scope>
    <scope>MUTAGENESIS OF TYR-360</scope>
</reference>
<reference key="17">
    <citation type="journal article" date="1994" name="Nat. Struct. Biol.">
        <title>Structure of the catalytic domain of human fibroblast collagenase complexed with an inhibitor.</title>
        <authorList>
            <person name="Borkakoti N."/>
            <person name="Winkler F.K."/>
            <person name="Williams D.H."/>
            <person name="D'Arcy A."/>
            <person name="Broadhurst M.J."/>
            <person name="Brown P.A."/>
            <person name="Johnson W.H."/>
            <person name="Murray E.J."/>
        </authorList>
    </citation>
    <scope>X-RAY CRYSTALLOGRAPHY (2.2 ANGSTROMS) OF 101-269 IN COMPLEX WITH CALCIUM AND ZINC</scope>
</reference>
<reference key="18">
    <citation type="journal article" date="1994" name="Biochemistry">
        <title>Crystal structures of recombinant 19-kDa human fibroblast collagenase complexed to itself.</title>
        <authorList>
            <person name="Lovejoy B."/>
            <person name="Hassell A.M."/>
            <person name="Luther M.A."/>
            <person name="Weigl D."/>
            <person name="Jordan S.R."/>
        </authorList>
    </citation>
    <scope>X-RAY CRYSTALLOGRAPHY (1.9 ANGSTROMS) OF 102-269 IN COMPLEX WITH CALCIUM AND ZINC</scope>
</reference>
<reference key="19">
    <citation type="journal article" date="1994" name="Science">
        <title>Structure of the catalytic domain of fibroblast collagenase complexed with an inhibitor.</title>
        <authorList>
            <person name="Lovejoy B."/>
            <person name="Cleasby A."/>
            <person name="Hassell A.M."/>
            <person name="Longley K."/>
            <person name="Luther M.A."/>
            <person name="Weigl D."/>
            <person name="McGeehan G."/>
            <person name="McElroy A.B."/>
            <person name="Drewry D."/>
            <person name="Lambert M.H."/>
            <person name="Jordan S.R."/>
        </authorList>
    </citation>
    <scope>X-RAY CRYSTALLOGRAPHY (2.4 ANGSTROMS) OF 101-269 IN COMPLEX WITH CALCIUM AND ZINC</scope>
</reference>
<reference key="20">
    <citation type="journal article" date="1994" name="Proteins">
        <title>1.56-A structure of mature truncated human fibroblast collagenase.</title>
        <authorList>
            <person name="Spurlino J.C."/>
            <person name="Smallwood A.M."/>
            <person name="Carlton D.D."/>
            <person name="Banks T.M."/>
            <person name="Vavra K.J."/>
            <person name="Johnson J.S."/>
            <person name="Cook E.R."/>
            <person name="Falvo J."/>
            <person name="Wahl R.C."/>
            <person name="Pulvino T.A."/>
            <person name="Et A.L."/>
        </authorList>
    </citation>
    <scope>X-RAY CRYSTALLOGRAPHY (1.56 ANGSTROMS) OF 101-269 IN COMPLEX WITH CALCIUM AND ZINC</scope>
</reference>
<reference key="21">
    <citation type="journal article" date="1998" name="Biochemistry">
        <title>High-resolution solution structure of the inhibitor-free catalytic fragment of human fibroblast collagenase determined by multidimensional NMR.</title>
        <authorList>
            <person name="Moy F.J."/>
            <person name="Chanda P.K."/>
            <person name="Cosmi S."/>
            <person name="Pisano M.R."/>
            <person name="Urbano C."/>
            <person name="Wilhelm J."/>
            <person name="Powers R."/>
        </authorList>
    </citation>
    <scope>STRUCTURE BY NMR OF 101-269 IN COMPLEX WITH CALCIUM AND ZINC</scope>
</reference>
<reference key="22">
    <citation type="journal article" date="2005" name="J. Biol. Chem.">
        <title>X-ray structure of human proMMP-1: new insights into procollagenase activation and collagen binding.</title>
        <authorList>
            <person name="Jozic D."/>
            <person name="Bourenkov G."/>
            <person name="Lim N.H."/>
            <person name="Visse R."/>
            <person name="Nagase H."/>
            <person name="Bode W."/>
            <person name="Maskos K."/>
        </authorList>
    </citation>
    <scope>X-RAY CRYSTALLOGRAPHY (2.20 ANGSTROMS) OF 20-469 IN COMPLEX WITH CALCIUM AND ZINC</scope>
    <scope>DOMAIN</scope>
</reference>
<gene>
    <name type="primary">MMP1</name>
    <name type="synonym">CLG</name>
</gene>
<comment type="function">
    <text evidence="4 5 6 8">Cleaves collagens of types I, II, and III at one site in the helical domain. Also cleaves collagens of types VII and X (PubMed:1645757, PubMed:2153297, PubMed:2557822). In case of HIV infection, interacts and cleaves the secreted viral Tat protein, leading to a decrease in neuronal Tat's mediated neurotoxicity (PubMed:16807369).</text>
</comment>
<comment type="catalytic activity">
    <reaction evidence="4 5 6 8">
        <text>Cleavage of the triple helix of collagen at about three-quarters of the length of the molecule from the N-terminus, at 775-Gly-|-Ile-776 in the alpha1(I) chain. Cleaves synthetic substrates and alpha-macroglobulins at bonds where P1' is a hydrophobic residue.</text>
        <dbReference type="EC" id="3.4.24.7"/>
    </reaction>
</comment>
<comment type="cofactor">
    <cofactor evidence="9 10 11 12 13">
        <name>Ca(2+)</name>
        <dbReference type="ChEBI" id="CHEBI:29108"/>
    </cofactor>
    <text evidence="9 10 11 12 13">Binds 4 Ca(2+) ions per subunit.</text>
</comment>
<comment type="cofactor">
    <cofactor evidence="9 10 11 12 13">
        <name>Zn(2+)</name>
        <dbReference type="ChEBI" id="CHEBI:29105"/>
    </cofactor>
    <text evidence="9 10 11 12 13">Binds 2 Zn(2+) ions per subunit.</text>
</comment>
<comment type="activity regulation">
    <text>Can be activated without removal of the activation peptide.</text>
</comment>
<comment type="subunit">
    <text evidence="5">(Microbial infection) Interacts with HIV-1 Tat.</text>
</comment>
<comment type="subcellular location">
    <subcellularLocation>
        <location evidence="16">Secreted</location>
        <location evidence="16">Extracellular space</location>
        <location evidence="16">Extracellular matrix</location>
    </subcellularLocation>
</comment>
<comment type="domain">
    <text>There are two distinct domains in this protein; the catalytic N-terminal, and the C-terminal which is involved in substrate specificity and in binding TIMP (tissue inhibitor of metalloproteinases).</text>
</comment>
<comment type="domain">
    <text evidence="3 6">The conserved cysteine present in the cysteine-switch motif binds the catalytic zinc ion, thus inhibiting the enzyme. The dissociation of the cysteine from the zinc ion upon the activation-peptide release activates the enzyme.</text>
</comment>
<comment type="PTM">
    <text evidence="2">Undergoes autolytic cleavage to two major forms (22 kDa and 27 kDa). A minor form (25 kDa) is the glycosylated form of the 22 kDa form. The 27 kDa form has no activity while the 22/25 kDa form can act as activator for collagenase.</text>
</comment>
<comment type="PTM">
    <text evidence="7">Tyrosine phosphorylated in platelets by PKDCC/VLK.</text>
</comment>
<comment type="similarity">
    <text evidence="15">Belongs to the peptidase M10A family.</text>
</comment>
<comment type="online information" name="Wikipedia">
    <link uri="https://en.wikipedia.org/wiki/Collagenase"/>
    <text>Collagenase entry</text>
</comment>
<keyword id="KW-0002">3D-structure</keyword>
<keyword id="KW-0068">Autocatalytic cleavage</keyword>
<keyword id="KW-0106">Calcium</keyword>
<keyword id="KW-0177">Collagen degradation</keyword>
<keyword id="KW-0903">Direct protein sequencing</keyword>
<keyword id="KW-1015">Disulfide bond</keyword>
<keyword id="KW-0272">Extracellular matrix</keyword>
<keyword id="KW-0325">Glycoprotein</keyword>
<keyword id="KW-0945">Host-virus interaction</keyword>
<keyword id="KW-0378">Hydrolase</keyword>
<keyword id="KW-0479">Metal-binding</keyword>
<keyword id="KW-0482">Metalloprotease</keyword>
<keyword id="KW-0597">Phosphoprotein</keyword>
<keyword id="KW-0645">Protease</keyword>
<keyword id="KW-1267">Proteomics identification</keyword>
<keyword id="KW-1185">Reference proteome</keyword>
<keyword id="KW-0677">Repeat</keyword>
<keyword id="KW-0964">Secreted</keyword>
<keyword id="KW-0732">Signal</keyword>
<keyword id="KW-0862">Zinc</keyword>
<keyword id="KW-0865">Zymogen</keyword>
<accession>P03956</accession>
<accession>P08156</accession>
<sequence>MHSFPPLLLLLFWGVVSHSFPATLETQEQDVDLVQKYLEKYYNLKNDGRQVEKRRNSGPVVEKLKQMQEFFGLKVTGKPDAETLKVMKQPRCGVPDVAQFVLTEGNPRWEQTHLTYRIENYTPDLPRADVDHAIEKAFQLWSNVTPLTFTKVSEGQADIMISFVRGDHRDNSPFDGPGGNLAHAFQPGPGIGGDAHFDEDERWTNNFREYNLHRVAAHELGHSLGLSHSTDIGALMYPSYTFSGDVQLAQDDIDGIQAIYGRSQNPVQPIGPQTPKACDSKLTFDAITTIRGEVMFFKDRFYMRTNPFYPEVELNFISVFWPQLPNGLEAAYEFADRDEVRFFKGNKYWAVQGQNVLHGYPKDIYSSFGFPRTVKHIDAALSEENTGKTYFFVANKYWRYDEYKRSMDPGYPKMIAHDFPGIGHKVDAVFMKDGFFYFFHGTRQYKFDPKTKRILTLQKANSWFNCRKN</sequence>
<evidence type="ECO:0000250" key="1"/>
<evidence type="ECO:0000269" key="2">
    <source>
    </source>
</evidence>
<evidence type="ECO:0000269" key="3">
    <source>
    </source>
</evidence>
<evidence type="ECO:0000269" key="4">
    <source>
    </source>
</evidence>
<evidence type="ECO:0000269" key="5">
    <source>
    </source>
</evidence>
<evidence type="ECO:0000269" key="6">
    <source>
    </source>
</evidence>
<evidence type="ECO:0000269" key="7">
    <source>
    </source>
</evidence>
<evidence type="ECO:0000269" key="8">
    <source>
    </source>
</evidence>
<evidence type="ECO:0000269" key="9">
    <source>
    </source>
</evidence>
<evidence type="ECO:0000269" key="10">
    <source>
    </source>
</evidence>
<evidence type="ECO:0000269" key="11">
    <source>
    </source>
</evidence>
<evidence type="ECO:0000269" key="12">
    <source>
    </source>
</evidence>
<evidence type="ECO:0000269" key="13">
    <source>
    </source>
</evidence>
<evidence type="ECO:0000269" key="14">
    <source ref="6"/>
</evidence>
<evidence type="ECO:0000305" key="15"/>
<evidence type="ECO:0000305" key="16">
    <source>
    </source>
</evidence>
<evidence type="ECO:0007744" key="17">
    <source>
        <dbReference type="PDB" id="1AYK"/>
    </source>
</evidence>
<evidence type="ECO:0007744" key="18">
    <source>
        <dbReference type="PDB" id="1CGE"/>
    </source>
</evidence>
<evidence type="ECO:0007744" key="19">
    <source>
        <dbReference type="PDB" id="1CGF"/>
    </source>
</evidence>
<evidence type="ECO:0007744" key="20">
    <source>
        <dbReference type="PDB" id="1CGL"/>
    </source>
</evidence>
<evidence type="ECO:0007744" key="21">
    <source>
        <dbReference type="PDB" id="1HFC"/>
    </source>
</evidence>
<evidence type="ECO:0007744" key="22">
    <source>
        <dbReference type="PDB" id="1SU3"/>
    </source>
</evidence>
<evidence type="ECO:0007744" key="23">
    <source>
        <dbReference type="PDB" id="2AYK"/>
    </source>
</evidence>
<evidence type="ECO:0007744" key="24">
    <source>
        <dbReference type="PDB" id="2CLT"/>
    </source>
</evidence>
<evidence type="ECO:0007744" key="25">
    <source>
        <dbReference type="PDB" id="2J0T"/>
    </source>
</evidence>
<evidence type="ECO:0007744" key="26">
    <source>
        <dbReference type="PDB" id="2TCL"/>
    </source>
</evidence>
<evidence type="ECO:0007744" key="27">
    <source>
        <dbReference type="PDB" id="3AYK"/>
    </source>
</evidence>
<evidence type="ECO:0007744" key="28">
    <source>
        <dbReference type="PDB" id="3SHI"/>
    </source>
</evidence>
<evidence type="ECO:0007744" key="29">
    <source>
        <dbReference type="PDB" id="4AUO"/>
    </source>
</evidence>
<evidence type="ECO:0007744" key="30">
    <source>
        <dbReference type="PDB" id="4AYK"/>
    </source>
</evidence>
<evidence type="ECO:0007744" key="31">
    <source>
        <dbReference type="PDB" id="966C"/>
    </source>
</evidence>
<evidence type="ECO:0007829" key="32">
    <source>
        <dbReference type="PDB" id="1AYK"/>
    </source>
</evidence>
<evidence type="ECO:0007829" key="33">
    <source>
        <dbReference type="PDB" id="1HFC"/>
    </source>
</evidence>
<evidence type="ECO:0007829" key="34">
    <source>
        <dbReference type="PDB" id="1SU3"/>
    </source>
</evidence>
<evidence type="ECO:0007829" key="35">
    <source>
        <dbReference type="PDB" id="2J0T"/>
    </source>
</evidence>
<evidence type="ECO:0007829" key="36">
    <source>
        <dbReference type="PDB" id="3SHI"/>
    </source>
</evidence>
<evidence type="ECO:0007829" key="37">
    <source>
        <dbReference type="PDB" id="966C"/>
    </source>
</evidence>
<feature type="signal peptide">
    <location>
        <begin position="1"/>
        <end position="19"/>
    </location>
</feature>
<feature type="propeptide" id="PRO_0000028703" description="Activation peptide" evidence="8">
    <location>
        <begin position="20"/>
        <end position="99"/>
    </location>
</feature>
<feature type="chain" id="PRO_0000028704" description="Interstitial collagenase">
    <location>
        <begin position="100"/>
        <end position="469"/>
    </location>
</feature>
<feature type="chain" id="PRO_0000028705" description="22 kDa interstitial collagenase">
    <location>
        <begin position="100"/>
        <end position="269"/>
    </location>
</feature>
<feature type="chain" id="PRO_0000028706" description="27 kDa interstitial collagenase">
    <location>
        <begin position="270"/>
        <end position="469"/>
    </location>
</feature>
<feature type="repeat" description="Hemopexin 1">
    <location>
        <begin position="275"/>
        <end position="324"/>
    </location>
</feature>
<feature type="repeat" description="Hemopexin 2">
    <location>
        <begin position="325"/>
        <end position="371"/>
    </location>
</feature>
<feature type="repeat" description="Hemopexin 3">
    <location>
        <begin position="374"/>
        <end position="422"/>
    </location>
</feature>
<feature type="repeat" description="Hemopexin 4">
    <location>
        <begin position="423"/>
        <end position="466"/>
    </location>
</feature>
<feature type="region of interest" description="Metalloprotease">
    <location>
        <begin position="98"/>
        <end position="276"/>
    </location>
</feature>
<feature type="short sequence motif" description="Cysteine switch" evidence="3 6">
    <location>
        <begin position="90"/>
        <end position="97"/>
    </location>
</feature>
<feature type="active site">
    <location>
        <position position="219"/>
    </location>
</feature>
<feature type="binding site" description="in inhibited form" evidence="3 22">
    <location>
        <position position="92"/>
    </location>
    <ligand>
        <name>Zn(2+)</name>
        <dbReference type="ChEBI" id="CHEBI:29105"/>
        <label>2</label>
        <note>catalytic</note>
    </ligand>
</feature>
<feature type="binding site" evidence="10 18 19 22 24 25 28 31">
    <location>
        <position position="124"/>
    </location>
    <ligand>
        <name>Ca(2+)</name>
        <dbReference type="ChEBI" id="CHEBI:29108"/>
        <label>1</label>
    </ligand>
</feature>
<feature type="binding site" evidence="3 9 10 18 19 22 24 25 26 29 31">
    <location>
        <position position="158"/>
    </location>
    <ligand>
        <name>Ca(2+)</name>
        <dbReference type="ChEBI" id="CHEBI:29108"/>
        <label>2</label>
    </ligand>
</feature>
<feature type="binding site" evidence="3 9 10 11 12 13 17 18 19 20 21 22 23 24 25 26 27 28 29 30 31">
    <location>
        <position position="168"/>
    </location>
    <ligand>
        <name>Zn(2+)</name>
        <dbReference type="ChEBI" id="CHEBI:29105"/>
        <label>1</label>
    </ligand>
</feature>
<feature type="binding site" evidence="3 9 10 11 12 13 18 19 20 21 22 23 24 25 26 28 29 31">
    <location>
        <position position="170"/>
    </location>
    <ligand>
        <name>Zn(2+)</name>
        <dbReference type="ChEBI" id="CHEBI:29105"/>
        <label>1</label>
    </ligand>
</feature>
<feature type="binding site" evidence="3 9 10 11 12 18 19 20 21 22 24 25 26 28 29 31">
    <location>
        <position position="175"/>
    </location>
    <ligand>
        <name>Ca(2+)</name>
        <dbReference type="ChEBI" id="CHEBI:29108"/>
        <label>3</label>
    </ligand>
</feature>
<feature type="binding site" evidence="3 9 10 11 12 13 17 18 19 20 21 22 23 24 25 26 28 29 30 31">
    <location>
        <position position="176"/>
    </location>
    <ligand>
        <name>Ca(2+)</name>
        <dbReference type="ChEBI" id="CHEBI:29108"/>
        <label>3</label>
    </ligand>
</feature>
<feature type="binding site" evidence="3 9 10 11 12 13 17 18 19 20 21 22 23 24 25 26 28 29 31">
    <location>
        <position position="178"/>
    </location>
    <ligand>
        <name>Ca(2+)</name>
        <dbReference type="ChEBI" id="CHEBI:29108"/>
        <label>3</label>
    </ligand>
</feature>
<feature type="binding site" evidence="3 9 10 11 12 13 17 18 19 20 21 22 23 24 25 26 28 29 31">
    <location>
        <position position="180"/>
    </location>
    <ligand>
        <name>Ca(2+)</name>
        <dbReference type="ChEBI" id="CHEBI:29108"/>
        <label>3</label>
    </ligand>
</feature>
<feature type="binding site" evidence="3 9 10 11 12 13 17 18 19 20 21 22 23 24 25 26 27 28 29 30 31">
    <location>
        <position position="183"/>
    </location>
    <ligand>
        <name>Zn(2+)</name>
        <dbReference type="ChEBI" id="CHEBI:29105"/>
        <label>1</label>
    </ligand>
</feature>
<feature type="binding site" evidence="3 9 10 18 19 22 24 25 26 29 31">
    <location>
        <position position="190"/>
    </location>
    <ligand>
        <name>Ca(2+)</name>
        <dbReference type="ChEBI" id="CHEBI:29108"/>
        <label>2</label>
    </ligand>
</feature>
<feature type="binding site" evidence="9 10 18 19 24 25 26 29 31">
    <location>
        <position position="192"/>
    </location>
    <ligand>
        <name>Ca(2+)</name>
        <dbReference type="ChEBI" id="CHEBI:29108"/>
        <label>2</label>
    </ligand>
</feature>
<feature type="binding site" evidence="3 9 10 18 19 22 24 25 26 29 31">
    <location>
        <position position="194"/>
    </location>
    <ligand>
        <name>Ca(2+)</name>
        <dbReference type="ChEBI" id="CHEBI:29108"/>
        <label>2</label>
    </ligand>
</feature>
<feature type="binding site" evidence="3 9 10 11 12 13 17 18 19 20 21 22 23 24 25 26 27 28 29 30 31">
    <location>
        <position position="196"/>
    </location>
    <ligand>
        <name>Zn(2+)</name>
        <dbReference type="ChEBI" id="CHEBI:29105"/>
        <label>1</label>
    </ligand>
</feature>
<feature type="binding site" evidence="3 9 10 11 12 18 19 20 21 22 24 25 26 27 28 29 30 31">
    <location>
        <position position="198"/>
    </location>
    <ligand>
        <name>Ca(2+)</name>
        <dbReference type="ChEBI" id="CHEBI:29108"/>
        <label>3</label>
    </ligand>
</feature>
<feature type="binding site" evidence="3 10 18 19 22 24 25 28 29 31">
    <location>
        <position position="199"/>
    </location>
    <ligand>
        <name>Ca(2+)</name>
        <dbReference type="ChEBI" id="CHEBI:29108"/>
        <label>1</label>
    </ligand>
</feature>
<feature type="binding site" evidence="3 9 10 11 12 13 17 18 19 20 21 22 23 24 25 26 27 28 29 31">
    <location>
        <position position="201"/>
    </location>
    <ligand>
        <name>Ca(2+)</name>
        <dbReference type="ChEBI" id="CHEBI:29108"/>
        <label>3</label>
    </ligand>
</feature>
<feature type="binding site" evidence="3 9 10 11 12 13 17 18 19 20 21 22 23 24 25 26 27 28 29 30 31">
    <location>
        <position position="218"/>
    </location>
    <ligand>
        <name>Zn(2+)</name>
        <dbReference type="ChEBI" id="CHEBI:29105"/>
        <label>2</label>
        <note>catalytic</note>
    </ligand>
</feature>
<feature type="binding site" evidence="3 9 10 11 12 13 17 18 19 20 21 22 23 24 25 26 27 28 29 30 31">
    <location>
        <position position="222"/>
    </location>
    <ligand>
        <name>Zn(2+)</name>
        <dbReference type="ChEBI" id="CHEBI:29105"/>
        <label>2</label>
        <note>catalytic</note>
    </ligand>
</feature>
<feature type="binding site" evidence="3 9 10 11 12 13 17 18 19 20 21 22 23 24 25 26 27 28 29 30 31">
    <location>
        <position position="228"/>
    </location>
    <ligand>
        <name>Zn(2+)</name>
        <dbReference type="ChEBI" id="CHEBI:29105"/>
        <label>2</label>
        <note>catalytic</note>
    </ligand>
</feature>
<feature type="binding site" evidence="3 22 24 29">
    <location>
        <position position="285"/>
    </location>
    <ligand>
        <name>Ca(2+)</name>
        <dbReference type="ChEBI" id="CHEBI:29108"/>
        <label>4</label>
    </ligand>
</feature>
<feature type="binding site" evidence="3 22 24 29">
    <location>
        <position position="329"/>
    </location>
    <ligand>
        <name>Ca(2+)</name>
        <dbReference type="ChEBI" id="CHEBI:29108"/>
        <label>4</label>
    </ligand>
</feature>
<feature type="binding site" evidence="3 22 24 29">
    <location>
        <position position="378"/>
    </location>
    <ligand>
        <name>Ca(2+)</name>
        <dbReference type="ChEBI" id="CHEBI:29108"/>
        <label>4</label>
    </ligand>
</feature>
<feature type="binding site" evidence="3 22 24 29">
    <location>
        <position position="427"/>
    </location>
    <ligand>
        <name>Ca(2+)</name>
        <dbReference type="ChEBI" id="CHEBI:29108"/>
        <label>4</label>
    </ligand>
</feature>
<feature type="site" description="Not glycosylated" evidence="2">
    <location>
        <position position="143"/>
    </location>
</feature>
<feature type="site" description="Cleavage; by autolysis" evidence="8">
    <location>
        <begin position="269"/>
        <end position="270"/>
    </location>
</feature>
<feature type="modified residue" description="Phosphoserine" evidence="7">
    <location>
        <position position="57"/>
    </location>
</feature>
<feature type="modified residue" description="Phosphothreonine" evidence="7">
    <location>
        <position position="274"/>
    </location>
</feature>
<feature type="modified residue" description="Phosphotyrosine; by PKDCC" evidence="7">
    <location>
        <position position="360"/>
    </location>
</feature>
<feature type="glycosylation site" id="CAR_000105" description="N-linked (GlcNAc...) asparagine" evidence="2">
    <location>
        <position position="120"/>
    </location>
</feature>
<feature type="disulfide bond" evidence="1">
    <location>
        <begin position="278"/>
        <end position="466"/>
    </location>
</feature>
<feature type="sequence variant" id="VAR_011969" description="In dbSNP:rs554499.">
    <original>Q</original>
    <variation>P</variation>
    <location>
        <position position="29"/>
    </location>
</feature>
<feature type="sequence variant" id="VAR_021024" description="In dbSNP:rs17879973." evidence="14">
    <original>I</original>
    <variation>V</variation>
    <location>
        <position position="191"/>
    </location>
</feature>
<feature type="sequence variant" id="VAR_011970" description="In dbSNP:rs513964.">
    <original>D</original>
    <variation>G</variation>
    <location>
        <position position="252"/>
    </location>
</feature>
<feature type="sequence variant" id="VAR_054005" description="In dbSNP:rs12282811.">
    <original>R</original>
    <variation>S</variation>
    <location>
        <position position="262"/>
    </location>
</feature>
<feature type="sequence variant" id="VAR_021025" description="In dbSNP:rs17879165." evidence="14">
    <original>R</original>
    <variation>Q</variation>
    <location>
        <position position="405"/>
    </location>
</feature>
<feature type="sequence variant" id="VAR_021026" description="In dbSNP:rs17884120." evidence="14">
    <original>S</original>
    <variation>T</variation>
    <location>
        <position position="406"/>
    </location>
</feature>
<feature type="mutagenesis site" description="Partial reduction of tyrosine phosphorylation in the presence of PKDCC/VLK." evidence="7">
    <original>Y</original>
    <variation>F</variation>
    <location>
        <position position="360"/>
    </location>
</feature>
<feature type="sequence conflict" description="In Ref. 9; AAA35700." evidence="15" ref="9">
    <original>N</original>
    <variation>K</variation>
    <location>
        <position position="43"/>
    </location>
</feature>
<feature type="sequence conflict" description="In Ref. 9; AAA35700." evidence="15" ref="9">
    <location>
        <position position="64"/>
    </location>
</feature>
<feature type="sequence conflict" description="In Ref. 3; AAA35699." evidence="15" ref="3">
    <original>T</original>
    <variation>R</variation>
    <location>
        <position position="115"/>
    </location>
</feature>
<feature type="sequence conflict" description="In Ref. 2; CAA28858." evidence="15" ref="2">
    <original>D</original>
    <variation>H</variation>
    <location>
        <position position="200"/>
    </location>
</feature>
<feature type="sequence conflict" description="In Ref. 2; CAA28858." evidence="15" ref="2">
    <original>R</original>
    <variation>T</variation>
    <location>
        <position position="208"/>
    </location>
</feature>
<feature type="sequence conflict" description="In Ref. 2; CAA28858." evidence="15" ref="2">
    <original>I</original>
    <variation>T</variation>
    <location>
        <position position="317"/>
    </location>
</feature>
<feature type="sequence conflict" description="In Ref. 3; AAA35699." evidence="15" ref="3">
    <original>G</original>
    <variation>S</variation>
    <location>
        <position position="410"/>
    </location>
</feature>
<feature type="helix" evidence="34">
    <location>
        <begin position="33"/>
        <end position="41"/>
    </location>
</feature>
<feature type="helix" evidence="34">
    <location>
        <begin position="59"/>
        <end position="70"/>
    </location>
</feature>
<feature type="helix" evidence="34">
    <location>
        <begin position="81"/>
        <end position="87"/>
    </location>
</feature>
<feature type="strand" evidence="32">
    <location>
        <begin position="103"/>
        <end position="106"/>
    </location>
</feature>
<feature type="strand" evidence="33">
    <location>
        <begin position="112"/>
        <end position="118"/>
    </location>
</feature>
<feature type="strand" evidence="36">
    <location>
        <begin position="123"/>
        <end position="125"/>
    </location>
</feature>
<feature type="helix" evidence="33">
    <location>
        <begin position="127"/>
        <end position="142"/>
    </location>
</feature>
<feature type="strand" evidence="35">
    <location>
        <begin position="144"/>
        <end position="146"/>
    </location>
</feature>
<feature type="strand" evidence="33">
    <location>
        <begin position="148"/>
        <end position="151"/>
    </location>
</feature>
<feature type="strand" evidence="33">
    <location>
        <begin position="153"/>
        <end position="155"/>
    </location>
</feature>
<feature type="strand" evidence="33">
    <location>
        <begin position="158"/>
        <end position="164"/>
    </location>
</feature>
<feature type="strand" evidence="33">
    <location>
        <begin position="169"/>
        <end position="171"/>
    </location>
</feature>
<feature type="strand" evidence="33">
    <location>
        <begin position="176"/>
        <end position="179"/>
    </location>
</feature>
<feature type="strand" evidence="33">
    <location>
        <begin position="182"/>
        <end position="184"/>
    </location>
</feature>
<feature type="strand" evidence="33">
    <location>
        <begin position="187"/>
        <end position="189"/>
    </location>
</feature>
<feature type="turn" evidence="33">
    <location>
        <begin position="190"/>
        <end position="193"/>
    </location>
</feature>
<feature type="strand" evidence="33">
    <location>
        <begin position="195"/>
        <end position="198"/>
    </location>
</feature>
<feature type="strand" evidence="33">
    <location>
        <begin position="204"/>
        <end position="209"/>
    </location>
</feature>
<feature type="helix" evidence="33">
    <location>
        <begin position="212"/>
        <end position="223"/>
    </location>
</feature>
<feature type="strand" evidence="37">
    <location>
        <begin position="237"/>
        <end position="239"/>
    </location>
</feature>
<feature type="helix" evidence="33">
    <location>
        <begin position="250"/>
        <end position="260"/>
    </location>
</feature>
<feature type="strand" evidence="34">
    <location>
        <begin position="285"/>
        <end position="290"/>
    </location>
</feature>
<feature type="strand" evidence="34">
    <location>
        <begin position="293"/>
        <end position="298"/>
    </location>
</feature>
<feature type="strand" evidence="34">
    <location>
        <begin position="301"/>
        <end position="304"/>
    </location>
</feature>
<feature type="strand" evidence="34">
    <location>
        <begin position="309"/>
        <end position="311"/>
    </location>
</feature>
<feature type="strand" evidence="34">
    <location>
        <begin position="313"/>
        <end position="316"/>
    </location>
</feature>
<feature type="helix" evidence="34">
    <location>
        <begin position="317"/>
        <end position="319"/>
    </location>
</feature>
<feature type="strand" evidence="34">
    <location>
        <begin position="330"/>
        <end position="334"/>
    </location>
</feature>
<feature type="helix" evidence="34">
    <location>
        <begin position="335"/>
        <end position="337"/>
    </location>
</feature>
<feature type="strand" evidence="34">
    <location>
        <begin position="339"/>
        <end position="344"/>
    </location>
</feature>
<feature type="strand" evidence="34">
    <location>
        <begin position="347"/>
        <end position="352"/>
    </location>
</feature>
<feature type="strand" evidence="34">
    <location>
        <begin position="361"/>
        <end position="363"/>
    </location>
</feature>
<feature type="helix" evidence="34">
    <location>
        <begin position="364"/>
        <end position="368"/>
    </location>
</feature>
<feature type="strand" evidence="34">
    <location>
        <begin position="379"/>
        <end position="382"/>
    </location>
</feature>
<feature type="turn" evidence="34">
    <location>
        <begin position="384"/>
        <end position="386"/>
    </location>
</feature>
<feature type="strand" evidence="34">
    <location>
        <begin position="388"/>
        <end position="393"/>
    </location>
</feature>
<feature type="strand" evidence="34">
    <location>
        <begin position="396"/>
        <end position="401"/>
    </location>
</feature>
<feature type="turn" evidence="34">
    <location>
        <begin position="402"/>
        <end position="405"/>
    </location>
</feature>
<feature type="strand" evidence="34">
    <location>
        <begin position="412"/>
        <end position="414"/>
    </location>
</feature>
<feature type="helix" evidence="34">
    <location>
        <begin position="415"/>
        <end position="418"/>
    </location>
</feature>
<feature type="strand" evidence="34">
    <location>
        <begin position="427"/>
        <end position="432"/>
    </location>
</feature>
<feature type="strand" evidence="34">
    <location>
        <begin position="435"/>
        <end position="440"/>
    </location>
</feature>
<feature type="strand" evidence="34">
    <location>
        <begin position="443"/>
        <end position="448"/>
    </location>
</feature>
<feature type="turn" evidence="34">
    <location>
        <begin position="449"/>
        <end position="452"/>
    </location>
</feature>
<feature type="strand" evidence="34">
    <location>
        <begin position="453"/>
        <end position="459"/>
    </location>
</feature>
<feature type="turn" evidence="34">
    <location>
        <begin position="460"/>
        <end position="463"/>
    </location>
</feature>
<name>MMP1_HUMAN</name>
<organism>
    <name type="scientific">Homo sapiens</name>
    <name type="common">Human</name>
    <dbReference type="NCBI Taxonomy" id="9606"/>
    <lineage>
        <taxon>Eukaryota</taxon>
        <taxon>Metazoa</taxon>
        <taxon>Chordata</taxon>
        <taxon>Craniata</taxon>
        <taxon>Vertebrata</taxon>
        <taxon>Euteleostomi</taxon>
        <taxon>Mammalia</taxon>
        <taxon>Eutheria</taxon>
        <taxon>Euarchontoglires</taxon>
        <taxon>Primates</taxon>
        <taxon>Haplorrhini</taxon>
        <taxon>Catarrhini</taxon>
        <taxon>Hominidae</taxon>
        <taxon>Homo</taxon>
    </lineage>
</organism>